<protein>
    <recommendedName>
        <fullName>Transcriptional regulatory protein rxt2</fullName>
    </recommendedName>
</protein>
<dbReference type="EMBL" id="CU329671">
    <property type="protein sequence ID" value="CAA22281.2"/>
    <property type="molecule type" value="Genomic_DNA"/>
</dbReference>
<dbReference type="PIR" id="T40458">
    <property type="entry name" value="T40458"/>
</dbReference>
<dbReference type="PDB" id="8I03">
    <property type="method" value="EM"/>
    <property type="resolution" value="3.20 A"/>
    <property type="chains" value="F=1-240"/>
</dbReference>
<dbReference type="PDBsum" id="8I03"/>
<dbReference type="EMDB" id="EMD-35093"/>
<dbReference type="SMR" id="O94355"/>
<dbReference type="BioGRID" id="277214">
    <property type="interactions" value="221"/>
</dbReference>
<dbReference type="ComplexPortal" id="CPX-9129">
    <property type="entry name" value="RPD3L histone deacetylase complex"/>
</dbReference>
<dbReference type="FunCoup" id="O94355">
    <property type="interactions" value="1"/>
</dbReference>
<dbReference type="STRING" id="284812.O94355"/>
<dbReference type="iPTMnet" id="O94355"/>
<dbReference type="PaxDb" id="4896-SPBC428.06c.1"/>
<dbReference type="EnsemblFungi" id="SPBC428.06c.1">
    <property type="protein sequence ID" value="SPBC428.06c.1:pep"/>
    <property type="gene ID" value="SPBC428.06c"/>
</dbReference>
<dbReference type="KEGG" id="spo:2540689"/>
<dbReference type="PomBase" id="SPBC428.06c"/>
<dbReference type="VEuPathDB" id="FungiDB:SPBC428.06c"/>
<dbReference type="eggNOG" id="ENOG502S5XA">
    <property type="taxonomic scope" value="Eukaryota"/>
</dbReference>
<dbReference type="HOGENOM" id="CLU_1171210_0_0_1"/>
<dbReference type="InParanoid" id="O94355"/>
<dbReference type="OMA" id="EWLDHDN"/>
<dbReference type="PRO" id="PR:O94355"/>
<dbReference type="Proteomes" id="UP000002485">
    <property type="component" value="Chromosome II"/>
</dbReference>
<dbReference type="GO" id="GO:0005829">
    <property type="term" value="C:cytosol"/>
    <property type="evidence" value="ECO:0000318"/>
    <property type="project" value="GO_Central"/>
</dbReference>
<dbReference type="GO" id="GO:0005634">
    <property type="term" value="C:nucleus"/>
    <property type="evidence" value="ECO:0007005"/>
    <property type="project" value="PomBase"/>
</dbReference>
<dbReference type="GO" id="GO:0033698">
    <property type="term" value="C:Rpd3L complex"/>
    <property type="evidence" value="ECO:0000314"/>
    <property type="project" value="PomBase"/>
</dbReference>
<dbReference type="GO" id="GO:0070210">
    <property type="term" value="C:Rpd3L-Expanded complex"/>
    <property type="evidence" value="ECO:0000314"/>
    <property type="project" value="PomBase"/>
</dbReference>
<dbReference type="GO" id="GO:0006357">
    <property type="term" value="P:regulation of transcription by RNA polymerase II"/>
    <property type="evidence" value="ECO:0000305"/>
    <property type="project" value="PomBase"/>
</dbReference>
<dbReference type="GO" id="GO:0045815">
    <property type="term" value="P:transcription initiation-coupled chromatin remodeling"/>
    <property type="evidence" value="ECO:0000305"/>
    <property type="project" value="PomBase"/>
</dbReference>
<dbReference type="InterPro" id="IPR039602">
    <property type="entry name" value="Rxt2"/>
</dbReference>
<dbReference type="InterPro" id="IPR013904">
    <property type="entry name" value="RXT2_N"/>
</dbReference>
<dbReference type="PANTHER" id="PTHR28232">
    <property type="entry name" value="TRANSCRIPTIONAL REGULATORY PROTEIN RXT2"/>
    <property type="match status" value="1"/>
</dbReference>
<dbReference type="PANTHER" id="PTHR28232:SF1">
    <property type="entry name" value="TRANSCRIPTIONAL REGULATORY PROTEIN RXT2"/>
    <property type="match status" value="1"/>
</dbReference>
<dbReference type="Pfam" id="PF08595">
    <property type="entry name" value="RXT2_N"/>
    <property type="match status" value="1"/>
</dbReference>
<reference key="1">
    <citation type="journal article" date="2002" name="Nature">
        <title>The genome sequence of Schizosaccharomyces pombe.</title>
        <authorList>
            <person name="Wood V."/>
            <person name="Gwilliam R."/>
            <person name="Rajandream M.A."/>
            <person name="Lyne M.H."/>
            <person name="Lyne R."/>
            <person name="Stewart A."/>
            <person name="Sgouros J.G."/>
            <person name="Peat N."/>
            <person name="Hayles J."/>
            <person name="Baker S.G."/>
            <person name="Basham D."/>
            <person name="Bowman S."/>
            <person name="Brooks K."/>
            <person name="Brown D."/>
            <person name="Brown S."/>
            <person name="Chillingworth T."/>
            <person name="Churcher C.M."/>
            <person name="Collins M."/>
            <person name="Connor R."/>
            <person name="Cronin A."/>
            <person name="Davis P."/>
            <person name="Feltwell T."/>
            <person name="Fraser A."/>
            <person name="Gentles S."/>
            <person name="Goble A."/>
            <person name="Hamlin N."/>
            <person name="Harris D.E."/>
            <person name="Hidalgo J."/>
            <person name="Hodgson G."/>
            <person name="Holroyd S."/>
            <person name="Hornsby T."/>
            <person name="Howarth S."/>
            <person name="Huckle E.J."/>
            <person name="Hunt S."/>
            <person name="Jagels K."/>
            <person name="James K.D."/>
            <person name="Jones L."/>
            <person name="Jones M."/>
            <person name="Leather S."/>
            <person name="McDonald S."/>
            <person name="McLean J."/>
            <person name="Mooney P."/>
            <person name="Moule S."/>
            <person name="Mungall K.L."/>
            <person name="Murphy L.D."/>
            <person name="Niblett D."/>
            <person name="Odell C."/>
            <person name="Oliver K."/>
            <person name="O'Neil S."/>
            <person name="Pearson D."/>
            <person name="Quail M.A."/>
            <person name="Rabbinowitsch E."/>
            <person name="Rutherford K.M."/>
            <person name="Rutter S."/>
            <person name="Saunders D."/>
            <person name="Seeger K."/>
            <person name="Sharp S."/>
            <person name="Skelton J."/>
            <person name="Simmonds M.N."/>
            <person name="Squares R."/>
            <person name="Squares S."/>
            <person name="Stevens K."/>
            <person name="Taylor K."/>
            <person name="Taylor R.G."/>
            <person name="Tivey A."/>
            <person name="Walsh S.V."/>
            <person name="Warren T."/>
            <person name="Whitehead S."/>
            <person name="Woodward J.R."/>
            <person name="Volckaert G."/>
            <person name="Aert R."/>
            <person name="Robben J."/>
            <person name="Grymonprez B."/>
            <person name="Weltjens I."/>
            <person name="Vanstreels E."/>
            <person name="Rieger M."/>
            <person name="Schaefer M."/>
            <person name="Mueller-Auer S."/>
            <person name="Gabel C."/>
            <person name="Fuchs M."/>
            <person name="Duesterhoeft A."/>
            <person name="Fritzc C."/>
            <person name="Holzer E."/>
            <person name="Moestl D."/>
            <person name="Hilbert H."/>
            <person name="Borzym K."/>
            <person name="Langer I."/>
            <person name="Beck A."/>
            <person name="Lehrach H."/>
            <person name="Reinhardt R."/>
            <person name="Pohl T.M."/>
            <person name="Eger P."/>
            <person name="Zimmermann W."/>
            <person name="Wedler H."/>
            <person name="Wambutt R."/>
            <person name="Purnelle B."/>
            <person name="Goffeau A."/>
            <person name="Cadieu E."/>
            <person name="Dreano S."/>
            <person name="Gloux S."/>
            <person name="Lelaure V."/>
            <person name="Mottier S."/>
            <person name="Galibert F."/>
            <person name="Aves S.J."/>
            <person name="Xiang Z."/>
            <person name="Hunt C."/>
            <person name="Moore K."/>
            <person name="Hurst S.M."/>
            <person name="Lucas M."/>
            <person name="Rochet M."/>
            <person name="Gaillardin C."/>
            <person name="Tallada V.A."/>
            <person name="Garzon A."/>
            <person name="Thode G."/>
            <person name="Daga R.R."/>
            <person name="Cruzado L."/>
            <person name="Jimenez J."/>
            <person name="Sanchez M."/>
            <person name="del Rey F."/>
            <person name="Benito J."/>
            <person name="Dominguez A."/>
            <person name="Revuelta J.L."/>
            <person name="Moreno S."/>
            <person name="Armstrong J."/>
            <person name="Forsburg S.L."/>
            <person name="Cerutti L."/>
            <person name="Lowe T."/>
            <person name="McCombie W.R."/>
            <person name="Paulsen I."/>
            <person name="Potashkin J."/>
            <person name="Shpakovski G.V."/>
            <person name="Ussery D."/>
            <person name="Barrell B.G."/>
            <person name="Nurse P."/>
        </authorList>
    </citation>
    <scope>NUCLEOTIDE SEQUENCE [LARGE SCALE GENOMIC DNA]</scope>
    <source>
        <strain>972 / ATCC 24843</strain>
    </source>
</reference>
<reference key="2">
    <citation type="journal article" date="2011" name="Science">
        <title>Comparative functional genomics of the fission yeasts.</title>
        <authorList>
            <person name="Rhind N."/>
            <person name="Chen Z."/>
            <person name="Yassour M."/>
            <person name="Thompson D.A."/>
            <person name="Haas B.J."/>
            <person name="Habib N."/>
            <person name="Wapinski I."/>
            <person name="Roy S."/>
            <person name="Lin M.F."/>
            <person name="Heiman D.I."/>
            <person name="Young S.K."/>
            <person name="Furuya K."/>
            <person name="Guo Y."/>
            <person name="Pidoux A."/>
            <person name="Chen H.M."/>
            <person name="Robbertse B."/>
            <person name="Goldberg J.M."/>
            <person name="Aoki K."/>
            <person name="Bayne E.H."/>
            <person name="Berlin A.M."/>
            <person name="Desjardins C.A."/>
            <person name="Dobbs E."/>
            <person name="Dukaj L."/>
            <person name="Fan L."/>
            <person name="FitzGerald M.G."/>
            <person name="French C."/>
            <person name="Gujja S."/>
            <person name="Hansen K."/>
            <person name="Keifenheim D."/>
            <person name="Levin J.Z."/>
            <person name="Mosher R.A."/>
            <person name="Mueller C.A."/>
            <person name="Pfiffner J."/>
            <person name="Priest M."/>
            <person name="Russ C."/>
            <person name="Smialowska A."/>
            <person name="Swoboda P."/>
            <person name="Sykes S.M."/>
            <person name="Vaughn M."/>
            <person name="Vengrova S."/>
            <person name="Yoder R."/>
            <person name="Zeng Q."/>
            <person name="Allshire R."/>
            <person name="Baulcombe D."/>
            <person name="Birren B.W."/>
            <person name="Brown W."/>
            <person name="Ekwall K."/>
            <person name="Kellis M."/>
            <person name="Leatherwood J."/>
            <person name="Levin H."/>
            <person name="Margalit H."/>
            <person name="Martienssen R."/>
            <person name="Nieduszynski C.A."/>
            <person name="Spatafora J.W."/>
            <person name="Friedman N."/>
            <person name="Dalgaard J.Z."/>
            <person name="Baumann P."/>
            <person name="Niki H."/>
            <person name="Regev A."/>
            <person name="Nusbaum C."/>
        </authorList>
    </citation>
    <scope>REVISION OF GENE MODEL</scope>
</reference>
<reference key="3">
    <citation type="journal article" date="2006" name="Nat. Biotechnol.">
        <title>ORFeome cloning and global analysis of protein localization in the fission yeast Schizosaccharomyces pombe.</title>
        <authorList>
            <person name="Matsuyama A."/>
            <person name="Arai R."/>
            <person name="Yashiroda Y."/>
            <person name="Shirai A."/>
            <person name="Kamata A."/>
            <person name="Sekido S."/>
            <person name="Kobayashi Y."/>
            <person name="Hashimoto A."/>
            <person name="Hamamoto M."/>
            <person name="Hiraoka Y."/>
            <person name="Horinouchi S."/>
            <person name="Yoshida M."/>
        </authorList>
    </citation>
    <scope>SUBCELLULAR LOCATION [LARGE SCALE ANALYSIS]</scope>
</reference>
<reference key="4">
    <citation type="journal article" date="2008" name="Genome Biol.">
        <title>Chromatin Central: towards the comparative proteome by accurate mapping of the yeast proteomic environment.</title>
        <authorList>
            <person name="Shevchenko A."/>
            <person name="Roguev A."/>
            <person name="Schaft D."/>
            <person name="Buchanan L."/>
            <person name="Habermann B."/>
            <person name="Sakalar C."/>
            <person name="Thomas H."/>
            <person name="Krogan N.J."/>
            <person name="Shevchenko A."/>
            <person name="Stewart A.F."/>
        </authorList>
    </citation>
    <scope>IDENTIFICATION IN THE RPD3C(L) COMPLEX</scope>
    <scope>IDENTIFICATION BY MASS SPECTROMETRY</scope>
</reference>
<reference key="5">
    <citation type="journal article" date="2010" name="Genome Biol.">
        <title>Global fitness profiling of fission yeast deletion strains by barcode sequencing.</title>
        <authorList>
            <person name="Han T.X."/>
            <person name="Xu X.Y."/>
            <person name="Zhang M.J."/>
            <person name="Peng X."/>
            <person name="Du L.L."/>
        </authorList>
    </citation>
    <scope>DISRUPTION PHENOTYPE</scope>
</reference>
<keyword id="KW-0002">3D-structure</keyword>
<keyword id="KW-0156">Chromatin regulator</keyword>
<keyword id="KW-0539">Nucleus</keyword>
<keyword id="KW-1185">Reference proteome</keyword>
<keyword id="KW-0678">Repressor</keyword>
<keyword id="KW-0804">Transcription</keyword>
<keyword id="KW-0805">Transcription regulation</keyword>
<evidence type="ECO:0000250" key="1"/>
<evidence type="ECO:0000269" key="2">
    <source>
    </source>
</evidence>
<evidence type="ECO:0000269" key="3">
    <source>
    </source>
</evidence>
<evidence type="ECO:0000305" key="4"/>
<evidence type="ECO:0007829" key="5">
    <source>
        <dbReference type="PDB" id="8I03"/>
    </source>
</evidence>
<comment type="function">
    <text evidence="1">Component of the RPD3C(L) histone deacetylase complex (HDAC) responsible for the deacetylation of lysine residues on the N-terminal part of the core histones (H2A, H2B, H3 and H4). Histone deacetylation gives a tag for epigenetic repression and plays an important role in transcriptional regulation, cell cycle progression and developmental events (By similarity).</text>
</comment>
<comment type="subunit">
    <text evidence="1">Component of the RPD3C(L) complex.</text>
</comment>
<comment type="subcellular location">
    <subcellularLocation>
        <location evidence="2">Nucleus</location>
    </subcellularLocation>
</comment>
<comment type="disruption phenotype">
    <text evidence="3">Leads to sensitivity to camptothecin, thiabendazole, DNA damaging agents and microtubule depolymerizing drugs.</text>
</comment>
<comment type="similarity">
    <text evidence="4">Belongs to the RXT2 family.</text>
</comment>
<feature type="chain" id="PRO_0000374023" description="Transcriptional regulatory protein rxt2">
    <location>
        <begin position="1"/>
        <end position="240"/>
    </location>
</feature>
<feature type="helix" evidence="5">
    <location>
        <begin position="2"/>
        <end position="16"/>
    </location>
</feature>
<feature type="strand" evidence="5">
    <location>
        <begin position="39"/>
        <end position="42"/>
    </location>
</feature>
<feature type="helix" evidence="5">
    <location>
        <begin position="43"/>
        <end position="45"/>
    </location>
</feature>
<feature type="strand" evidence="5">
    <location>
        <begin position="64"/>
        <end position="66"/>
    </location>
</feature>
<feature type="strand" evidence="5">
    <location>
        <begin position="69"/>
        <end position="71"/>
    </location>
</feature>
<feature type="strand" evidence="5">
    <location>
        <begin position="76"/>
        <end position="78"/>
    </location>
</feature>
<feature type="helix" evidence="5">
    <location>
        <begin position="87"/>
        <end position="89"/>
    </location>
</feature>
<feature type="turn" evidence="5">
    <location>
        <begin position="91"/>
        <end position="94"/>
    </location>
</feature>
<feature type="helix" evidence="5">
    <location>
        <begin position="97"/>
        <end position="100"/>
    </location>
</feature>
<feature type="helix" evidence="5">
    <location>
        <begin position="107"/>
        <end position="111"/>
    </location>
</feature>
<feature type="helix" evidence="5">
    <location>
        <begin position="114"/>
        <end position="119"/>
    </location>
</feature>
<feature type="helix" evidence="5">
    <location>
        <begin position="125"/>
        <end position="154"/>
    </location>
</feature>
<feature type="helix" evidence="5">
    <location>
        <begin position="164"/>
        <end position="167"/>
    </location>
</feature>
<feature type="helix" evidence="5">
    <location>
        <begin position="174"/>
        <end position="216"/>
    </location>
</feature>
<feature type="turn" evidence="5">
    <location>
        <begin position="217"/>
        <end position="220"/>
    </location>
</feature>
<gene>
    <name type="primary">rtx2</name>
    <name type="ORF">SPBC428.06c</name>
</gene>
<name>RTX2_SCHPO</name>
<accession>O94355</accession>
<proteinExistence type="evidence at protein level"/>
<sequence length="240" mass="27076">MKQFEEQIERFKQALFEDSDASDSDSSIGEALTNRGLKRKKGSKNVYYGCVGNSSGSSIDIDYYNIGNTKRGVVSHFRRRIDPEWLDHDNPYNDINIAEIMSPLTKPQDLLTHPAISSIFEQNYLSILASSALEIISAEHKYTAHLEQLMVALLGDDPSLPGPPHEVFGISPEQCRELTITVQEALEKSKEFIRCWTNVRMDLLRAIRFKNKVIAYCQGEDYNGNTQVLSKNESDGKPNS</sequence>
<organism>
    <name type="scientific">Schizosaccharomyces pombe (strain 972 / ATCC 24843)</name>
    <name type="common">Fission yeast</name>
    <dbReference type="NCBI Taxonomy" id="284812"/>
    <lineage>
        <taxon>Eukaryota</taxon>
        <taxon>Fungi</taxon>
        <taxon>Dikarya</taxon>
        <taxon>Ascomycota</taxon>
        <taxon>Taphrinomycotina</taxon>
        <taxon>Schizosaccharomycetes</taxon>
        <taxon>Schizosaccharomycetales</taxon>
        <taxon>Schizosaccharomycetaceae</taxon>
        <taxon>Schizosaccharomyces</taxon>
    </lineage>
</organism>